<sequence>MTFNHKTIEELHDLLVKKEISAVELTQATLADIKEREAAVDSFITVSEEEALAQAAALDAKGIDADNLMSGIPLAVKDNISTKGILTTAASKILYNYKPIFDATSVEKLYGKDMIIVGKTNMDEFAMGGSSENSYFKTTKNAWDSSKVPGGSSGGSATAVASGQVRLSLGSDTGGSIRQPASFNGVVGLKPTYGRVSRFGLIAFGSSLDQIGPFSQTVKENAQLLNVISGNDPKDSTSSQEEVPDFTSKIGQDIKGMKIALPKEYMGEGIDSKVKETILAAAKHLESLGAIVEEVSLPHSKYGVAVYYIIASSEASSNLQRFDGIRYGYRAEGIENLEDVYVKSRSEGFGEEVKRRIMLGTFSLSSGYYDAYFKKAGQVRTLIMQDFAKVFEKYDLILGPTAPTVAYDLGSQNQDPVAMYLADLLTIPVNLAGLPGISIPAGFVDGLPVGLQLIGNHFDEATIYQTAAAFEATTDYHKQQPVIFGGEK</sequence>
<name>GATA_STRSV</name>
<comment type="function">
    <text evidence="1">Allows the formation of correctly charged Gln-tRNA(Gln) through the transamidation of misacylated Glu-tRNA(Gln) in organisms which lack glutaminyl-tRNA synthetase. The reaction takes place in the presence of glutamine and ATP through an activated gamma-phospho-Glu-tRNA(Gln).</text>
</comment>
<comment type="catalytic activity">
    <reaction evidence="1">
        <text>L-glutamyl-tRNA(Gln) + L-glutamine + ATP + H2O = L-glutaminyl-tRNA(Gln) + L-glutamate + ADP + phosphate + H(+)</text>
        <dbReference type="Rhea" id="RHEA:17521"/>
        <dbReference type="Rhea" id="RHEA-COMP:9681"/>
        <dbReference type="Rhea" id="RHEA-COMP:9684"/>
        <dbReference type="ChEBI" id="CHEBI:15377"/>
        <dbReference type="ChEBI" id="CHEBI:15378"/>
        <dbReference type="ChEBI" id="CHEBI:29985"/>
        <dbReference type="ChEBI" id="CHEBI:30616"/>
        <dbReference type="ChEBI" id="CHEBI:43474"/>
        <dbReference type="ChEBI" id="CHEBI:58359"/>
        <dbReference type="ChEBI" id="CHEBI:78520"/>
        <dbReference type="ChEBI" id="CHEBI:78521"/>
        <dbReference type="ChEBI" id="CHEBI:456216"/>
        <dbReference type="EC" id="6.3.5.7"/>
    </reaction>
</comment>
<comment type="subunit">
    <text evidence="1">Heterotrimer of A, B and C subunits.</text>
</comment>
<comment type="similarity">
    <text evidence="1">Belongs to the amidase family. GatA subfamily.</text>
</comment>
<dbReference type="EC" id="6.3.5.7" evidence="1"/>
<dbReference type="EMBL" id="CP000387">
    <property type="protein sequence ID" value="ABN44013.1"/>
    <property type="molecule type" value="Genomic_DNA"/>
</dbReference>
<dbReference type="RefSeq" id="WP_011836596.1">
    <property type="nucleotide sequence ID" value="NC_009009.1"/>
</dbReference>
<dbReference type="RefSeq" id="YP_001034563.1">
    <property type="nucleotide sequence ID" value="NC_009009.1"/>
</dbReference>
<dbReference type="SMR" id="A3CLF8"/>
<dbReference type="STRING" id="388919.SSA_0570"/>
<dbReference type="KEGG" id="ssa:SSA_0570"/>
<dbReference type="PATRIC" id="fig|388919.9.peg.549"/>
<dbReference type="eggNOG" id="COG0154">
    <property type="taxonomic scope" value="Bacteria"/>
</dbReference>
<dbReference type="HOGENOM" id="CLU_009600_0_3_9"/>
<dbReference type="OrthoDB" id="9811471at2"/>
<dbReference type="Proteomes" id="UP000002148">
    <property type="component" value="Chromosome"/>
</dbReference>
<dbReference type="GO" id="GO:0030956">
    <property type="term" value="C:glutamyl-tRNA(Gln) amidotransferase complex"/>
    <property type="evidence" value="ECO:0007669"/>
    <property type="project" value="InterPro"/>
</dbReference>
<dbReference type="GO" id="GO:0005524">
    <property type="term" value="F:ATP binding"/>
    <property type="evidence" value="ECO:0007669"/>
    <property type="project" value="UniProtKB-KW"/>
</dbReference>
<dbReference type="GO" id="GO:0050567">
    <property type="term" value="F:glutaminyl-tRNA synthase (glutamine-hydrolyzing) activity"/>
    <property type="evidence" value="ECO:0007669"/>
    <property type="project" value="UniProtKB-UniRule"/>
</dbReference>
<dbReference type="GO" id="GO:0006412">
    <property type="term" value="P:translation"/>
    <property type="evidence" value="ECO:0007669"/>
    <property type="project" value="UniProtKB-UniRule"/>
</dbReference>
<dbReference type="Gene3D" id="3.90.1300.10">
    <property type="entry name" value="Amidase signature (AS) domain"/>
    <property type="match status" value="1"/>
</dbReference>
<dbReference type="HAMAP" id="MF_00120">
    <property type="entry name" value="GatA"/>
    <property type="match status" value="1"/>
</dbReference>
<dbReference type="InterPro" id="IPR000120">
    <property type="entry name" value="Amidase"/>
</dbReference>
<dbReference type="InterPro" id="IPR020556">
    <property type="entry name" value="Amidase_CS"/>
</dbReference>
<dbReference type="InterPro" id="IPR023631">
    <property type="entry name" value="Amidase_dom"/>
</dbReference>
<dbReference type="InterPro" id="IPR036928">
    <property type="entry name" value="AS_sf"/>
</dbReference>
<dbReference type="InterPro" id="IPR004412">
    <property type="entry name" value="GatA"/>
</dbReference>
<dbReference type="NCBIfam" id="TIGR00132">
    <property type="entry name" value="gatA"/>
    <property type="match status" value="1"/>
</dbReference>
<dbReference type="PANTHER" id="PTHR11895:SF151">
    <property type="entry name" value="GLUTAMYL-TRNA(GLN) AMIDOTRANSFERASE SUBUNIT A"/>
    <property type="match status" value="1"/>
</dbReference>
<dbReference type="PANTHER" id="PTHR11895">
    <property type="entry name" value="TRANSAMIDASE"/>
    <property type="match status" value="1"/>
</dbReference>
<dbReference type="Pfam" id="PF01425">
    <property type="entry name" value="Amidase"/>
    <property type="match status" value="1"/>
</dbReference>
<dbReference type="SUPFAM" id="SSF75304">
    <property type="entry name" value="Amidase signature (AS) enzymes"/>
    <property type="match status" value="1"/>
</dbReference>
<dbReference type="PROSITE" id="PS00571">
    <property type="entry name" value="AMIDASES"/>
    <property type="match status" value="1"/>
</dbReference>
<accession>A3CLF8</accession>
<feature type="chain" id="PRO_1000015917" description="Glutamyl-tRNA(Gln) amidotransferase subunit A">
    <location>
        <begin position="1"/>
        <end position="488"/>
    </location>
</feature>
<feature type="active site" description="Charge relay system" evidence="1">
    <location>
        <position position="77"/>
    </location>
</feature>
<feature type="active site" description="Charge relay system" evidence="1">
    <location>
        <position position="152"/>
    </location>
</feature>
<feature type="active site" description="Acyl-ester intermediate" evidence="1">
    <location>
        <position position="176"/>
    </location>
</feature>
<proteinExistence type="inferred from homology"/>
<reference key="1">
    <citation type="journal article" date="2007" name="J. Bacteriol.">
        <title>Genome of the opportunistic pathogen Streptococcus sanguinis.</title>
        <authorList>
            <person name="Xu P."/>
            <person name="Alves J.M."/>
            <person name="Kitten T."/>
            <person name="Brown A."/>
            <person name="Chen Z."/>
            <person name="Ozaki L.S."/>
            <person name="Manque P."/>
            <person name="Ge X."/>
            <person name="Serrano M.G."/>
            <person name="Puiu D."/>
            <person name="Hendricks S."/>
            <person name="Wang Y."/>
            <person name="Chaplin M.D."/>
            <person name="Akan D."/>
            <person name="Paik S."/>
            <person name="Peterson D.L."/>
            <person name="Macrina F.L."/>
            <person name="Buck G.A."/>
        </authorList>
    </citation>
    <scope>NUCLEOTIDE SEQUENCE [LARGE SCALE GENOMIC DNA]</scope>
    <source>
        <strain>SK36</strain>
    </source>
</reference>
<protein>
    <recommendedName>
        <fullName evidence="1">Glutamyl-tRNA(Gln) amidotransferase subunit A</fullName>
        <shortName evidence="1">Glu-ADT subunit A</shortName>
        <ecNumber evidence="1">6.3.5.7</ecNumber>
    </recommendedName>
</protein>
<organism>
    <name type="scientific">Streptococcus sanguinis (strain SK36)</name>
    <dbReference type="NCBI Taxonomy" id="388919"/>
    <lineage>
        <taxon>Bacteria</taxon>
        <taxon>Bacillati</taxon>
        <taxon>Bacillota</taxon>
        <taxon>Bacilli</taxon>
        <taxon>Lactobacillales</taxon>
        <taxon>Streptococcaceae</taxon>
        <taxon>Streptococcus</taxon>
    </lineage>
</organism>
<keyword id="KW-0067">ATP-binding</keyword>
<keyword id="KW-0436">Ligase</keyword>
<keyword id="KW-0547">Nucleotide-binding</keyword>
<keyword id="KW-0648">Protein biosynthesis</keyword>
<keyword id="KW-1185">Reference proteome</keyword>
<evidence type="ECO:0000255" key="1">
    <source>
        <dbReference type="HAMAP-Rule" id="MF_00120"/>
    </source>
</evidence>
<gene>
    <name evidence="1" type="primary">gatA</name>
    <name type="ordered locus">SSA_0570</name>
</gene>